<name>TVB54_HUMAN</name>
<sequence>MGPGLLCWALLCLLGAGSVETGVTQSPTHLIKTRGQQVTLRCSSQSGHNTVSWYQQALGQGPQFIFQYYREEENGRGNFPPRFSGLQFPNYSSELNVNALELDDSALYLCASSL</sequence>
<comment type="function">
    <text evidence="3 5 6 7">V region of the variable domain of T cell receptor (TR) beta chain that participates in the antigen recognition (PubMed:24600447). Alpha-beta T cell receptors are antigen specific receptors which are essential to the immune response and are present on the cell surface of T lymphocytes. Recognize peptide-major histocompatibility (MH) (pMH) complexes that are displayed by antigen presenting cells (APC), a prerequisite for efficient T cell adaptive immunity against pathogens (PubMed:25493333). Binding of alpha-beta TR to pMH complex initiates TR-CD3 clustering on the cell surface and intracellular activation of LCK that phosphorylates the ITAM motifs of CD3G, CD3D, CD3E and CD247 enabling the recruitment of ZAP70. In turn ZAP70 phosphorylates LAT, which recruits numerous signaling molecules to form the LAT signalosome. The LAT signalosome propagates signal branching to three major signaling pathways, the calcium, the mitogen-activated protein kinase (MAPK) kinase and the nuclear factor NF-kappa-B (NF-kB) pathways, leading to the mobilization of transcription factors that are critical for gene expression and essential for T cell growth and differentiation (PubMed:23524462). The T cell repertoire is generated in the thymus, by V-(D)-J rearrangement. This repertoire is then shaped by intrathymic selection events to generate a peripheral T cell pool of self-MH restricted, non-autoaggressive T cells. Post-thymic interaction of alpha-beta TR with the pMH complexes shapes TR structural and functional avidity (PubMed:15040585).</text>
</comment>
<comment type="subunit">
    <text evidence="4">Alpha-beta TR is a heterodimer composed of an alpha and beta chain; disulfide-linked. The alpha-beta TR is associated with the transmembrane signaling CD3 coreceptor proteins to form the TR-CD3 (TcR or TCR). The assembly of alpha-beta TR heterodimers with CD3 occurs in the endoplasmic reticulum where a single alpha-beta TR heterodimer associates with one CD3D-CD3E heterodimer, one CD3G-CD3E heterodimer and one CD247 homodimer forming a stable octameric structure. CD3D-CD3E and CD3G-CD3E heterodimers preferentially associate with TR alpha and TR beta chains, respectively. The association of the CD247 homodimer is the last step of TcR assembly in the endoplasmic reticulum and is required for transport to the cell surface.</text>
</comment>
<comment type="subcellular location">
    <subcellularLocation>
        <location evidence="4">Cell membrane</location>
    </subcellularLocation>
</comment>
<comment type="polymorphism">
    <text evidence="9">There are several alleles. The sequence shown is that of IMGT allele TRBV5-4*01.</text>
</comment>
<organism>
    <name type="scientific">Homo sapiens</name>
    <name type="common">Human</name>
    <dbReference type="NCBI Taxonomy" id="9606"/>
    <lineage>
        <taxon>Eukaryota</taxon>
        <taxon>Metazoa</taxon>
        <taxon>Chordata</taxon>
        <taxon>Craniata</taxon>
        <taxon>Vertebrata</taxon>
        <taxon>Euteleostomi</taxon>
        <taxon>Mammalia</taxon>
        <taxon>Eutheria</taxon>
        <taxon>Euarchontoglires</taxon>
        <taxon>Primates</taxon>
        <taxon>Haplorrhini</taxon>
        <taxon>Catarrhini</taxon>
        <taxon>Hominidae</taxon>
        <taxon>Homo</taxon>
    </lineage>
</organism>
<evidence type="ECO:0000255" key="1"/>
<evidence type="ECO:0000255" key="2">
    <source>
        <dbReference type="PROSITE-ProRule" id="PRU00114"/>
    </source>
</evidence>
<evidence type="ECO:0000303" key="3">
    <source>
    </source>
</evidence>
<evidence type="ECO:0000303" key="4">
    <source>
    </source>
</evidence>
<evidence type="ECO:0000303" key="5">
    <source>
    </source>
</evidence>
<evidence type="ECO:0000303" key="6">
    <source>
    </source>
</evidence>
<evidence type="ECO:0000303" key="7">
    <source>
    </source>
</evidence>
<evidence type="ECO:0000303" key="8">
    <source ref="2"/>
</evidence>
<evidence type="ECO:0000305" key="9"/>
<gene>
    <name evidence="8" type="primary">TRBV5-4</name>
</gene>
<reference key="1">
    <citation type="journal article" date="2003" name="Nature">
        <title>The DNA sequence of human chromosome 7.</title>
        <authorList>
            <person name="Hillier L.W."/>
            <person name="Fulton R.S."/>
            <person name="Fulton L.A."/>
            <person name="Graves T.A."/>
            <person name="Pepin K.H."/>
            <person name="Wagner-McPherson C."/>
            <person name="Layman D."/>
            <person name="Maas J."/>
            <person name="Jaeger S."/>
            <person name="Walker R."/>
            <person name="Wylie K."/>
            <person name="Sekhon M."/>
            <person name="Becker M.C."/>
            <person name="O'Laughlin M.D."/>
            <person name="Schaller M.E."/>
            <person name="Fewell G.A."/>
            <person name="Delehaunty K.D."/>
            <person name="Miner T.L."/>
            <person name="Nash W.E."/>
            <person name="Cordes M."/>
            <person name="Du H."/>
            <person name="Sun H."/>
            <person name="Edwards J."/>
            <person name="Bradshaw-Cordum H."/>
            <person name="Ali J."/>
            <person name="Andrews S."/>
            <person name="Isak A."/>
            <person name="Vanbrunt A."/>
            <person name="Nguyen C."/>
            <person name="Du F."/>
            <person name="Lamar B."/>
            <person name="Courtney L."/>
            <person name="Kalicki J."/>
            <person name="Ozersky P."/>
            <person name="Bielicki L."/>
            <person name="Scott K."/>
            <person name="Holmes A."/>
            <person name="Harkins R."/>
            <person name="Harris A."/>
            <person name="Strong C.M."/>
            <person name="Hou S."/>
            <person name="Tomlinson C."/>
            <person name="Dauphin-Kohlberg S."/>
            <person name="Kozlowicz-Reilly A."/>
            <person name="Leonard S."/>
            <person name="Rohlfing T."/>
            <person name="Rock S.M."/>
            <person name="Tin-Wollam A.-M."/>
            <person name="Abbott A."/>
            <person name="Minx P."/>
            <person name="Maupin R."/>
            <person name="Strowmatt C."/>
            <person name="Latreille P."/>
            <person name="Miller N."/>
            <person name="Johnson D."/>
            <person name="Murray J."/>
            <person name="Woessner J.P."/>
            <person name="Wendl M.C."/>
            <person name="Yang S.-P."/>
            <person name="Schultz B.R."/>
            <person name="Wallis J.W."/>
            <person name="Spieth J."/>
            <person name="Bieri T.A."/>
            <person name="Nelson J.O."/>
            <person name="Berkowicz N."/>
            <person name="Wohldmann P.E."/>
            <person name="Cook L.L."/>
            <person name="Hickenbotham M.T."/>
            <person name="Eldred J."/>
            <person name="Williams D."/>
            <person name="Bedell J.A."/>
            <person name="Mardis E.R."/>
            <person name="Clifton S.W."/>
            <person name="Chissoe S.L."/>
            <person name="Marra M.A."/>
            <person name="Raymond C."/>
            <person name="Haugen E."/>
            <person name="Gillett W."/>
            <person name="Zhou Y."/>
            <person name="James R."/>
            <person name="Phelps K."/>
            <person name="Iadanoto S."/>
            <person name="Bubb K."/>
            <person name="Simms E."/>
            <person name="Levy R."/>
            <person name="Clendenning J."/>
            <person name="Kaul R."/>
            <person name="Kent W.J."/>
            <person name="Furey T.S."/>
            <person name="Baertsch R.A."/>
            <person name="Brent M.R."/>
            <person name="Keibler E."/>
            <person name="Flicek P."/>
            <person name="Bork P."/>
            <person name="Suyama M."/>
            <person name="Bailey J.A."/>
            <person name="Portnoy M.E."/>
            <person name="Torrents D."/>
            <person name="Chinwalla A.T."/>
            <person name="Gish W.R."/>
            <person name="Eddy S.R."/>
            <person name="McPherson J.D."/>
            <person name="Olson M.V."/>
            <person name="Eichler E.E."/>
            <person name="Green E.D."/>
            <person name="Waterston R.H."/>
            <person name="Wilson R.K."/>
        </authorList>
    </citation>
    <scope>NUCLEOTIDE SEQUENCE [LARGE SCALE GENOMIC DNA] (IMGT ALLELE TRBV5-4*01)</scope>
</reference>
<reference key="2">
    <citation type="book" date="2001" name="The T Cell Receptor FactsBook.">
        <title>The T Cell Receptor FactsBook.</title>
        <editorList>
            <person name="Lefranc M.P."/>
            <person name="Lefranc G."/>
        </editorList>
        <authorList>
            <person name="Lefranc M.P."/>
            <person name="Lefranc G."/>
        </authorList>
    </citation>
    <scope>NOMENCLATURE</scope>
</reference>
<reference key="3">
    <citation type="journal article" date="2004" name="Nat. Rev. Immunol.">
        <title>The many important facets of T-cell repertoire diversity.</title>
        <authorList>
            <person name="Nikolich-Zugich J."/>
            <person name="Slifka M.K."/>
            <person name="Messaoudi I."/>
        </authorList>
    </citation>
    <scope>REVIEW ON T CELL REPERTOIRE DIVERSITY</scope>
</reference>
<reference key="4">
    <citation type="journal article" date="2010" name="Cold Spring Harb. Perspect. Biol.">
        <title>Structural biology of the T-cell receptor: insights into receptor assembly, ligand recognition, and initiation of signaling.</title>
        <authorList>
            <person name="Wucherpfennig K.W."/>
            <person name="Gagnon E."/>
            <person name="Call M.J."/>
            <person name="Huseby E.S."/>
            <person name="Call M.E."/>
        </authorList>
    </citation>
    <scope>REVIEW ON T CELL RECEPTOR-CD3 COMPLEX ASSEMBLY</scope>
    <scope>SUBCELLULAR LOCATION</scope>
</reference>
<reference key="5">
    <citation type="journal article" date="2013" name="Nat. Rev. Immunol.">
        <title>T cell receptor signalling networks: branched, diversified and bounded.</title>
        <authorList>
            <person name="Brownlie R.J."/>
            <person name="Zamoyska R."/>
        </authorList>
    </citation>
    <scope>REVIEW ON T CELL RECEPTOR SIGNALING</scope>
</reference>
<reference key="6">
    <citation type="journal article" date="2014" name="Front. Immunol.">
        <title>Immunoglobulin and T Cell Receptor Genes: IMGT((R)) and the Birth and Rise of Immunoinformatics.</title>
        <authorList>
            <person name="Lefranc M.P."/>
        </authorList>
    </citation>
    <scope>NOMENCLATURE</scope>
</reference>
<reference key="7">
    <citation type="journal article" date="2015" name="Annu. Rev. Immunol.">
        <title>T cell antigen receptor recognition of antigen-presenting molecules.</title>
        <authorList>
            <person name="Rossjohn J."/>
            <person name="Gras S."/>
            <person name="Miles J.J."/>
            <person name="Turner S.J."/>
            <person name="Godfrey D.I."/>
            <person name="McCluskey J."/>
        </authorList>
    </citation>
    <scope>REVIEW ON FUNCTION</scope>
</reference>
<accession>A0A0C4DH59</accession>
<keyword id="KW-1064">Adaptive immunity</keyword>
<keyword id="KW-1003">Cell membrane</keyword>
<keyword id="KW-1015">Disulfide bond</keyword>
<keyword id="KW-0325">Glycoprotein</keyword>
<keyword id="KW-0391">Immunity</keyword>
<keyword id="KW-0393">Immunoglobulin domain</keyword>
<keyword id="KW-0472">Membrane</keyword>
<keyword id="KW-0675">Receptor</keyword>
<keyword id="KW-1185">Reference proteome</keyword>
<keyword id="KW-0732">Signal</keyword>
<keyword id="KW-1279">T cell receptor</keyword>
<protein>
    <recommendedName>
        <fullName evidence="8">T cell receptor beta variable 5-4</fullName>
    </recommendedName>
</protein>
<feature type="signal peptide" evidence="1">
    <location>
        <begin position="1"/>
        <end position="21"/>
    </location>
</feature>
<feature type="chain" id="PRO_5002178551" description="T cell receptor beta variable 5-4" evidence="1">
    <location>
        <begin position="22"/>
        <end position="114"/>
    </location>
</feature>
<feature type="domain" description="Ig-like" evidence="2">
    <location>
        <begin position="22"/>
        <end position="114" status="greater than"/>
    </location>
</feature>
<feature type="glycosylation site" description="N-linked (GlcNAc...) asparagine" evidence="1">
    <location>
        <position position="90"/>
    </location>
</feature>
<feature type="disulfide bond" evidence="2">
    <location>
        <begin position="42"/>
        <end position="110"/>
    </location>
</feature>
<feature type="non-terminal residue">
    <location>
        <position position="114"/>
    </location>
</feature>
<proteinExistence type="inferred from homology"/>
<dbReference type="EMBL" id="AC244196">
    <property type="status" value="NOT_ANNOTATED_CDS"/>
    <property type="molecule type" value="Genomic_DNA"/>
</dbReference>
<dbReference type="SMR" id="A0A0C4DH59"/>
<dbReference type="FunCoup" id="A0A0C4DH59">
    <property type="interactions" value="388"/>
</dbReference>
<dbReference type="IMGT_GENE-DB" id="TRBV5-4"/>
<dbReference type="GlyCosmos" id="A0A0C4DH59">
    <property type="glycosylation" value="1 site, No reported glycans"/>
</dbReference>
<dbReference type="GlyGen" id="A0A0C4DH59">
    <property type="glycosylation" value="1 site"/>
</dbReference>
<dbReference type="BioMuta" id="TRBV5-4"/>
<dbReference type="MassIVE" id="A0A0C4DH59"/>
<dbReference type="Ensembl" id="ENST00000454561.2">
    <property type="protein sequence ID" value="ENSP00000413966.2"/>
    <property type="gene ID" value="ENSG00000230099.2"/>
</dbReference>
<dbReference type="AGR" id="HGNC:12221"/>
<dbReference type="GeneCards" id="TRBV5-4"/>
<dbReference type="HGNC" id="HGNC:12221">
    <property type="gene designation" value="TRBV5-4"/>
</dbReference>
<dbReference type="HPA" id="ENSG00000230099">
    <property type="expression patterns" value="Group enriched (lymphoid tissue, pancreas)"/>
</dbReference>
<dbReference type="neXtProt" id="NX_A0A0C4DH59"/>
<dbReference type="OpenTargets" id="ENSG00000230099"/>
<dbReference type="VEuPathDB" id="HostDB:ENSG00000230099"/>
<dbReference type="GeneTree" id="ENSGT00940000154270"/>
<dbReference type="HOGENOM" id="CLU_077975_9_4_1"/>
<dbReference type="InParanoid" id="A0A0C4DH59"/>
<dbReference type="OMA" id="YYRGEDR"/>
<dbReference type="OrthoDB" id="9803478at2759"/>
<dbReference type="PAN-GO" id="A0A0C4DH59">
    <property type="GO annotations" value="2 GO annotations based on evolutionary models"/>
</dbReference>
<dbReference type="SignaLink" id="A0A0C4DH59"/>
<dbReference type="ChiTaRS" id="TRBV5-4">
    <property type="organism name" value="human"/>
</dbReference>
<dbReference type="Pharos" id="A0A0C4DH59">
    <property type="development level" value="Tdark"/>
</dbReference>
<dbReference type="PRO" id="PR:A0A0C4DH59"/>
<dbReference type="Proteomes" id="UP000005640">
    <property type="component" value="Chromosome 7"/>
</dbReference>
<dbReference type="RNAct" id="A0A0C4DH59">
    <property type="molecule type" value="protein"/>
</dbReference>
<dbReference type="Bgee" id="ENSG00000230099">
    <property type="expression patterns" value="Expressed in lymph node and 76 other cell types or tissues"/>
</dbReference>
<dbReference type="GO" id="GO:0005886">
    <property type="term" value="C:plasma membrane"/>
    <property type="evidence" value="ECO:0000318"/>
    <property type="project" value="GO_Central"/>
</dbReference>
<dbReference type="GO" id="GO:0042101">
    <property type="term" value="C:T cell receptor complex"/>
    <property type="evidence" value="ECO:0007669"/>
    <property type="project" value="UniProtKB-KW"/>
</dbReference>
<dbReference type="GO" id="GO:0002250">
    <property type="term" value="P:adaptive immune response"/>
    <property type="evidence" value="ECO:0007669"/>
    <property type="project" value="UniProtKB-KW"/>
</dbReference>
<dbReference type="GO" id="GO:0007166">
    <property type="term" value="P:cell surface receptor signaling pathway"/>
    <property type="evidence" value="ECO:0000318"/>
    <property type="project" value="GO_Central"/>
</dbReference>
<dbReference type="Gene3D" id="2.60.40.10">
    <property type="entry name" value="Immunoglobulins"/>
    <property type="match status" value="1"/>
</dbReference>
<dbReference type="InterPro" id="IPR007110">
    <property type="entry name" value="Ig-like_dom"/>
</dbReference>
<dbReference type="InterPro" id="IPR036179">
    <property type="entry name" value="Ig-like_dom_sf"/>
</dbReference>
<dbReference type="InterPro" id="IPR013783">
    <property type="entry name" value="Ig-like_fold"/>
</dbReference>
<dbReference type="InterPro" id="IPR013106">
    <property type="entry name" value="Ig_V-set"/>
</dbReference>
<dbReference type="InterPro" id="IPR050413">
    <property type="entry name" value="TCR_beta_variable"/>
</dbReference>
<dbReference type="PANTHER" id="PTHR23268:SF95">
    <property type="entry name" value="T CELL RECEPTOR BETA VARIABLE 5-4"/>
    <property type="match status" value="1"/>
</dbReference>
<dbReference type="PANTHER" id="PTHR23268">
    <property type="entry name" value="T-CELL RECEPTOR BETA CHAIN"/>
    <property type="match status" value="1"/>
</dbReference>
<dbReference type="Pfam" id="PF07686">
    <property type="entry name" value="V-set"/>
    <property type="match status" value="1"/>
</dbReference>
<dbReference type="SMART" id="SM00406">
    <property type="entry name" value="IGv"/>
    <property type="match status" value="1"/>
</dbReference>
<dbReference type="SUPFAM" id="SSF48726">
    <property type="entry name" value="Immunoglobulin"/>
    <property type="match status" value="1"/>
</dbReference>
<dbReference type="PROSITE" id="PS50835">
    <property type="entry name" value="IG_LIKE"/>
    <property type="match status" value="1"/>
</dbReference>